<gene>
    <name type="primary">ARV1</name>
</gene>
<evidence type="ECO:0000250" key="1">
    <source>
        <dbReference type="UniProtKB" id="Q9H2C2"/>
    </source>
</evidence>
<evidence type="ECO:0000255" key="2"/>
<evidence type="ECO:0000256" key="3">
    <source>
        <dbReference type="SAM" id="MobiDB-lite"/>
    </source>
</evidence>
<evidence type="ECO:0000305" key="4"/>
<keyword id="KW-0153">Cholesterol metabolism</keyword>
<keyword id="KW-0256">Endoplasmic reticulum</keyword>
<keyword id="KW-0443">Lipid metabolism</keyword>
<keyword id="KW-0445">Lipid transport</keyword>
<keyword id="KW-0472">Membrane</keyword>
<keyword id="KW-1185">Reference proteome</keyword>
<keyword id="KW-0753">Steroid metabolism</keyword>
<keyword id="KW-1207">Sterol metabolism</keyword>
<keyword id="KW-0812">Transmembrane</keyword>
<keyword id="KW-1133">Transmembrane helix</keyword>
<keyword id="KW-0813">Transport</keyword>
<feature type="chain" id="PRO_0000228658" description="Protein ARV1">
    <location>
        <begin position="1"/>
        <end position="282"/>
    </location>
</feature>
<feature type="transmembrane region" description="Helical" evidence="2">
    <location>
        <begin position="155"/>
        <end position="175"/>
    </location>
</feature>
<feature type="transmembrane region" description="Helical" evidence="2">
    <location>
        <begin position="189"/>
        <end position="209"/>
    </location>
</feature>
<feature type="transmembrane region" description="Helical" evidence="2">
    <location>
        <begin position="244"/>
        <end position="264"/>
    </location>
</feature>
<feature type="region of interest" description="Disordered" evidence="3">
    <location>
        <begin position="1"/>
        <end position="31"/>
    </location>
</feature>
<feature type="compositionally biased region" description="Basic and acidic residues" evidence="3">
    <location>
        <begin position="18"/>
        <end position="28"/>
    </location>
</feature>
<accession>Q3SZW3</accession>
<proteinExistence type="evidence at transcript level"/>
<organism>
    <name type="scientific">Bos taurus</name>
    <name type="common">Bovine</name>
    <dbReference type="NCBI Taxonomy" id="9913"/>
    <lineage>
        <taxon>Eukaryota</taxon>
        <taxon>Metazoa</taxon>
        <taxon>Chordata</taxon>
        <taxon>Craniata</taxon>
        <taxon>Vertebrata</taxon>
        <taxon>Euteleostomi</taxon>
        <taxon>Mammalia</taxon>
        <taxon>Eutheria</taxon>
        <taxon>Laurasiatheria</taxon>
        <taxon>Artiodactyla</taxon>
        <taxon>Ruminantia</taxon>
        <taxon>Pecora</taxon>
        <taxon>Bovidae</taxon>
        <taxon>Bovinae</taxon>
        <taxon>Bos</taxon>
    </lineage>
</organism>
<comment type="function">
    <text evidence="1">Plays a role as a mediator in the endoplasmic reticulum (ER) cholesterol and bile acid homeostasis. Participates in sterol transport out of the ER and distribution into plasma membranes.</text>
</comment>
<comment type="subcellular location">
    <subcellularLocation>
        <location evidence="1">Endoplasmic reticulum membrane</location>
        <topology evidence="4">Multi-pass membrane protein</topology>
    </subcellularLocation>
</comment>
<comment type="similarity">
    <text evidence="4">Belongs to the ARV1 family.</text>
</comment>
<dbReference type="EMBL" id="BC102679">
    <property type="protein sequence ID" value="AAI02680.1"/>
    <property type="molecule type" value="mRNA"/>
</dbReference>
<dbReference type="RefSeq" id="NP_001030379.1">
    <property type="nucleotide sequence ID" value="NM_001035302.2"/>
</dbReference>
<dbReference type="FunCoup" id="Q3SZW3">
    <property type="interactions" value="3485"/>
</dbReference>
<dbReference type="STRING" id="9913.ENSBTAP00000029091"/>
<dbReference type="PaxDb" id="9913-ENSBTAP00000029091"/>
<dbReference type="GeneID" id="515046"/>
<dbReference type="KEGG" id="bta:515046"/>
<dbReference type="CTD" id="64801"/>
<dbReference type="eggNOG" id="KOG3134">
    <property type="taxonomic scope" value="Eukaryota"/>
</dbReference>
<dbReference type="InParanoid" id="Q3SZW3"/>
<dbReference type="OrthoDB" id="2192830at2759"/>
<dbReference type="Proteomes" id="UP000009136">
    <property type="component" value="Unplaced"/>
</dbReference>
<dbReference type="GO" id="GO:0032541">
    <property type="term" value="C:cortical endoplasmic reticulum"/>
    <property type="evidence" value="ECO:0000318"/>
    <property type="project" value="GO_Central"/>
</dbReference>
<dbReference type="GO" id="GO:0005789">
    <property type="term" value="C:endoplasmic reticulum membrane"/>
    <property type="evidence" value="ECO:0000250"/>
    <property type="project" value="UniProtKB"/>
</dbReference>
<dbReference type="GO" id="GO:0005794">
    <property type="term" value="C:Golgi apparatus"/>
    <property type="evidence" value="ECO:0000318"/>
    <property type="project" value="GO_Central"/>
</dbReference>
<dbReference type="GO" id="GO:0008203">
    <property type="term" value="P:cholesterol metabolic process"/>
    <property type="evidence" value="ECO:0007669"/>
    <property type="project" value="UniProtKB-KW"/>
</dbReference>
<dbReference type="GO" id="GO:0032366">
    <property type="term" value="P:intracellular sterol transport"/>
    <property type="evidence" value="ECO:0000318"/>
    <property type="project" value="GO_Central"/>
</dbReference>
<dbReference type="GO" id="GO:0090181">
    <property type="term" value="P:regulation of cholesterol metabolic process"/>
    <property type="evidence" value="ECO:0000250"/>
    <property type="project" value="UniProtKB"/>
</dbReference>
<dbReference type="GO" id="GO:0032383">
    <property type="term" value="P:regulation of intracellular cholesterol transport"/>
    <property type="evidence" value="ECO:0000250"/>
    <property type="project" value="UniProtKB"/>
</dbReference>
<dbReference type="GO" id="GO:0097036">
    <property type="term" value="P:regulation of plasma membrane sterol distribution"/>
    <property type="evidence" value="ECO:0000318"/>
    <property type="project" value="GO_Central"/>
</dbReference>
<dbReference type="GO" id="GO:0006665">
    <property type="term" value="P:sphingolipid metabolic process"/>
    <property type="evidence" value="ECO:0000318"/>
    <property type="project" value="GO_Central"/>
</dbReference>
<dbReference type="GO" id="GO:0016125">
    <property type="term" value="P:sterol metabolic process"/>
    <property type="evidence" value="ECO:0000318"/>
    <property type="project" value="GO_Central"/>
</dbReference>
<dbReference type="InterPro" id="IPR007290">
    <property type="entry name" value="Arv1"/>
</dbReference>
<dbReference type="PANTHER" id="PTHR14467">
    <property type="entry name" value="ARV1"/>
    <property type="match status" value="1"/>
</dbReference>
<dbReference type="PANTHER" id="PTHR14467:SF0">
    <property type="entry name" value="PROTEIN ARV1"/>
    <property type="match status" value="1"/>
</dbReference>
<dbReference type="Pfam" id="PF04161">
    <property type="entry name" value="Arv1"/>
    <property type="match status" value="1"/>
</dbReference>
<reference key="1">
    <citation type="submission" date="2005-08" db="EMBL/GenBank/DDBJ databases">
        <authorList>
            <consortium name="NIH - Mammalian Gene Collection (MGC) project"/>
        </authorList>
    </citation>
    <scope>NUCLEOTIDE SEQUENCE [LARGE SCALE MRNA]</scope>
    <source>
        <strain>Hereford</strain>
        <tissue>Testis</tissue>
    </source>
</reference>
<name>ARV1_BOVIN</name>
<protein>
    <recommendedName>
        <fullName>Protein ARV1</fullName>
    </recommendedName>
</protein>
<sequence>MGTGGQNGLRPGKGNTEGVKEGKGKTDEVTMTSNTDASASCQYRCIECNQEAKELYRDYNHGVLKITICKSCQKPVDKYIEYDPVIILINAILCKAQAYRHILFNTKINMHGKLCVFCLLCEAYLRWWQLQDSSQSIDPDDFIRYAKEWDFYRMFAIASLEQTAYFIGIFAFLWVERPIRAKEKLNFTLLLKALLLSSYGKLLLIPAVIWEHDYTPLCLRLIKVFVLTSNFQAIRVTLNINRKLAFLAILSGLLVESTMVYFFQRMEWAVGSDCAIYKSQDF</sequence>